<accession>Q6CEC9</accession>
<organism>
    <name type="scientific">Yarrowia lipolytica (strain CLIB 122 / E 150)</name>
    <name type="common">Yeast</name>
    <name type="synonym">Candida lipolytica</name>
    <dbReference type="NCBI Taxonomy" id="284591"/>
    <lineage>
        <taxon>Eukaryota</taxon>
        <taxon>Fungi</taxon>
        <taxon>Dikarya</taxon>
        <taxon>Ascomycota</taxon>
        <taxon>Saccharomycotina</taxon>
        <taxon>Dipodascomycetes</taxon>
        <taxon>Dipodascales</taxon>
        <taxon>Dipodascales incertae sedis</taxon>
        <taxon>Yarrowia</taxon>
    </lineage>
</organism>
<sequence length="410" mass="45636">MKIFLAAEDTGAIKEVVFDEGMDTSVQDGPQPLITSFAALGKLKHIQKLALVTTSKGTKYIAAARKNGTIEVYPYLLTEESTPIFVYSAEGAEKCPWIGLTQYDDNTVVAGLEDGRLFFLDVSKVTIESDKPYDAPTASVKGPLACFALDRELYPGKIAVGGKERDLEVFGWAVKGDEVTVRSEFQARNVKSNEIDMRVPVWISGILFQASDKDGFRVITATRHGQIRVYETWHGKRPKWDFKVTKDPLRTLAPGMDASNVVSSDAHSSTFKFNFADNEKIVLKNKDNNQNKEHNRKSPCVVEKFPGSLGAVLHLVTTDNGLLATVGLDRYLRIFDLETTECTAKMFVGTQVSSLLFVDTERKTAQEKHVEETAEKEDDELWNDLDKVEKKSNKRRVAGNDEGKKKLKSA</sequence>
<name>NSA1_YARLI</name>
<protein>
    <recommendedName>
        <fullName>Ribosome biogenesis protein NSA1</fullName>
    </recommendedName>
</protein>
<reference key="1">
    <citation type="journal article" date="2004" name="Nature">
        <title>Genome evolution in yeasts.</title>
        <authorList>
            <person name="Dujon B."/>
            <person name="Sherman D."/>
            <person name="Fischer G."/>
            <person name="Durrens P."/>
            <person name="Casaregola S."/>
            <person name="Lafontaine I."/>
            <person name="de Montigny J."/>
            <person name="Marck C."/>
            <person name="Neuveglise C."/>
            <person name="Talla E."/>
            <person name="Goffard N."/>
            <person name="Frangeul L."/>
            <person name="Aigle M."/>
            <person name="Anthouard V."/>
            <person name="Babour A."/>
            <person name="Barbe V."/>
            <person name="Barnay S."/>
            <person name="Blanchin S."/>
            <person name="Beckerich J.-M."/>
            <person name="Beyne E."/>
            <person name="Bleykasten C."/>
            <person name="Boisrame A."/>
            <person name="Boyer J."/>
            <person name="Cattolico L."/>
            <person name="Confanioleri F."/>
            <person name="de Daruvar A."/>
            <person name="Despons L."/>
            <person name="Fabre E."/>
            <person name="Fairhead C."/>
            <person name="Ferry-Dumazet H."/>
            <person name="Groppi A."/>
            <person name="Hantraye F."/>
            <person name="Hennequin C."/>
            <person name="Jauniaux N."/>
            <person name="Joyet P."/>
            <person name="Kachouri R."/>
            <person name="Kerrest A."/>
            <person name="Koszul R."/>
            <person name="Lemaire M."/>
            <person name="Lesur I."/>
            <person name="Ma L."/>
            <person name="Muller H."/>
            <person name="Nicaud J.-M."/>
            <person name="Nikolski M."/>
            <person name="Oztas S."/>
            <person name="Ozier-Kalogeropoulos O."/>
            <person name="Pellenz S."/>
            <person name="Potier S."/>
            <person name="Richard G.-F."/>
            <person name="Straub M.-L."/>
            <person name="Suleau A."/>
            <person name="Swennen D."/>
            <person name="Tekaia F."/>
            <person name="Wesolowski-Louvel M."/>
            <person name="Westhof E."/>
            <person name="Wirth B."/>
            <person name="Zeniou-Meyer M."/>
            <person name="Zivanovic Y."/>
            <person name="Bolotin-Fukuhara M."/>
            <person name="Thierry A."/>
            <person name="Bouchier C."/>
            <person name="Caudron B."/>
            <person name="Scarpelli C."/>
            <person name="Gaillardin C."/>
            <person name="Weissenbach J."/>
            <person name="Wincker P."/>
            <person name="Souciet J.-L."/>
        </authorList>
    </citation>
    <scope>NUCLEOTIDE SEQUENCE [LARGE SCALE GENOMIC DNA]</scope>
    <source>
        <strain>CLIB 122 / E 150</strain>
    </source>
</reference>
<keyword id="KW-0539">Nucleus</keyword>
<keyword id="KW-1185">Reference proteome</keyword>
<keyword id="KW-0690">Ribosome biogenesis</keyword>
<keyword id="KW-0698">rRNA processing</keyword>
<evidence type="ECO:0000250" key="1"/>
<evidence type="ECO:0000256" key="2">
    <source>
        <dbReference type="SAM" id="MobiDB-lite"/>
    </source>
</evidence>
<evidence type="ECO:0000305" key="3"/>
<comment type="function">
    <text evidence="1">Involved in the biogenesis of the 60S ribosomal subunit.</text>
</comment>
<comment type="subunit">
    <text evidence="1">Component of the pre-66S ribosomal particle.</text>
</comment>
<comment type="subcellular location">
    <subcellularLocation>
        <location evidence="1">Nucleus</location>
        <location evidence="1">Nucleolus</location>
    </subcellularLocation>
</comment>
<comment type="similarity">
    <text evidence="3">Belongs to the NSA1 family.</text>
</comment>
<dbReference type="EMBL" id="CR382128">
    <property type="protein sequence ID" value="CAG83236.1"/>
    <property type="molecule type" value="Genomic_DNA"/>
</dbReference>
<dbReference type="RefSeq" id="XP_500983.1">
    <property type="nucleotide sequence ID" value="XM_500983.1"/>
</dbReference>
<dbReference type="SMR" id="Q6CEC9"/>
<dbReference type="FunCoup" id="Q6CEC9">
    <property type="interactions" value="628"/>
</dbReference>
<dbReference type="STRING" id="284591.Q6CEC9"/>
<dbReference type="EnsemblFungi" id="CAG83236">
    <property type="protein sequence ID" value="CAG83236"/>
    <property type="gene ID" value="YALI0_B16654g"/>
</dbReference>
<dbReference type="KEGG" id="yli:2907266"/>
<dbReference type="VEuPathDB" id="FungiDB:YALI0_B16654g"/>
<dbReference type="HOGENOM" id="CLU_033769_4_0_1"/>
<dbReference type="InParanoid" id="Q6CEC9"/>
<dbReference type="OMA" id="IWEAKNV"/>
<dbReference type="OrthoDB" id="3147at4891"/>
<dbReference type="Proteomes" id="UP000001300">
    <property type="component" value="Chromosome B"/>
</dbReference>
<dbReference type="GO" id="GO:0005730">
    <property type="term" value="C:nucleolus"/>
    <property type="evidence" value="ECO:0000318"/>
    <property type="project" value="GO_Central"/>
</dbReference>
<dbReference type="GO" id="GO:0030687">
    <property type="term" value="C:preribosome, large subunit precursor"/>
    <property type="evidence" value="ECO:0000318"/>
    <property type="project" value="GO_Central"/>
</dbReference>
<dbReference type="GO" id="GO:0042273">
    <property type="term" value="P:ribosomal large subunit biogenesis"/>
    <property type="evidence" value="ECO:0000318"/>
    <property type="project" value="GO_Central"/>
</dbReference>
<dbReference type="GO" id="GO:0006364">
    <property type="term" value="P:rRNA processing"/>
    <property type="evidence" value="ECO:0007669"/>
    <property type="project" value="UniProtKB-KW"/>
</dbReference>
<dbReference type="CDD" id="cd22858">
    <property type="entry name" value="Nsa1"/>
    <property type="match status" value="1"/>
</dbReference>
<dbReference type="Gene3D" id="2.130.10.10">
    <property type="entry name" value="YVTN repeat-like/Quinoprotein amine dehydrogenase"/>
    <property type="match status" value="1"/>
</dbReference>
<dbReference type="InterPro" id="IPR015943">
    <property type="entry name" value="WD40/YVTN_repeat-like_dom_sf"/>
</dbReference>
<dbReference type="InterPro" id="IPR036322">
    <property type="entry name" value="WD40_repeat_dom_sf"/>
</dbReference>
<dbReference type="InterPro" id="IPR037379">
    <property type="entry name" value="WDR74/Nsa1"/>
</dbReference>
<dbReference type="PANTHER" id="PTHR16038">
    <property type="entry name" value="NOP SEVEN ASSOCIATED PROTEIN 1"/>
    <property type="match status" value="1"/>
</dbReference>
<dbReference type="PANTHER" id="PTHR16038:SF4">
    <property type="entry name" value="WD REPEAT-CONTAINING PROTEIN 74"/>
    <property type="match status" value="1"/>
</dbReference>
<dbReference type="SUPFAM" id="SSF50978">
    <property type="entry name" value="WD40 repeat-like"/>
    <property type="match status" value="1"/>
</dbReference>
<gene>
    <name type="primary">NSA1</name>
    <name type="ordered locus">YALI0B16654g</name>
</gene>
<proteinExistence type="inferred from homology"/>
<feature type="chain" id="PRO_0000320405" description="Ribosome biogenesis protein NSA1">
    <location>
        <begin position="1"/>
        <end position="410"/>
    </location>
</feature>
<feature type="region of interest" description="Disordered" evidence="2">
    <location>
        <begin position="366"/>
        <end position="385"/>
    </location>
</feature>
<feature type="region of interest" description="Disordered" evidence="2">
    <location>
        <begin position="390"/>
        <end position="410"/>
    </location>
</feature>
<feature type="compositionally biased region" description="Acidic residues" evidence="2">
    <location>
        <begin position="374"/>
        <end position="383"/>
    </location>
</feature>